<dbReference type="EC" id="5.3.1.9" evidence="1"/>
<dbReference type="EMBL" id="CP001252">
    <property type="protein sequence ID" value="ACK47730.1"/>
    <property type="molecule type" value="Genomic_DNA"/>
</dbReference>
<dbReference type="RefSeq" id="WP_012588332.1">
    <property type="nucleotide sequence ID" value="NC_011663.1"/>
</dbReference>
<dbReference type="SMR" id="B8EFD8"/>
<dbReference type="KEGG" id="sbp:Sbal223_3246"/>
<dbReference type="HOGENOM" id="CLU_017947_3_1_6"/>
<dbReference type="UniPathway" id="UPA00109">
    <property type="reaction ID" value="UER00181"/>
</dbReference>
<dbReference type="UniPathway" id="UPA00138"/>
<dbReference type="Proteomes" id="UP000002507">
    <property type="component" value="Chromosome"/>
</dbReference>
<dbReference type="GO" id="GO:0005829">
    <property type="term" value="C:cytosol"/>
    <property type="evidence" value="ECO:0007669"/>
    <property type="project" value="TreeGrafter"/>
</dbReference>
<dbReference type="GO" id="GO:0097367">
    <property type="term" value="F:carbohydrate derivative binding"/>
    <property type="evidence" value="ECO:0007669"/>
    <property type="project" value="InterPro"/>
</dbReference>
<dbReference type="GO" id="GO:0004347">
    <property type="term" value="F:glucose-6-phosphate isomerase activity"/>
    <property type="evidence" value="ECO:0007669"/>
    <property type="project" value="UniProtKB-UniRule"/>
</dbReference>
<dbReference type="GO" id="GO:0048029">
    <property type="term" value="F:monosaccharide binding"/>
    <property type="evidence" value="ECO:0007669"/>
    <property type="project" value="TreeGrafter"/>
</dbReference>
<dbReference type="GO" id="GO:0006094">
    <property type="term" value="P:gluconeogenesis"/>
    <property type="evidence" value="ECO:0007669"/>
    <property type="project" value="UniProtKB-UniRule"/>
</dbReference>
<dbReference type="GO" id="GO:0051156">
    <property type="term" value="P:glucose 6-phosphate metabolic process"/>
    <property type="evidence" value="ECO:0007669"/>
    <property type="project" value="TreeGrafter"/>
</dbReference>
<dbReference type="GO" id="GO:0006096">
    <property type="term" value="P:glycolytic process"/>
    <property type="evidence" value="ECO:0007669"/>
    <property type="project" value="UniProtKB-UniRule"/>
</dbReference>
<dbReference type="CDD" id="cd05015">
    <property type="entry name" value="SIS_PGI_1"/>
    <property type="match status" value="1"/>
</dbReference>
<dbReference type="CDD" id="cd05016">
    <property type="entry name" value="SIS_PGI_2"/>
    <property type="match status" value="1"/>
</dbReference>
<dbReference type="FunFam" id="3.40.50.10490:FF:000018">
    <property type="entry name" value="Glucose-6-phosphate isomerase"/>
    <property type="match status" value="1"/>
</dbReference>
<dbReference type="Gene3D" id="1.10.1390.10">
    <property type="match status" value="1"/>
</dbReference>
<dbReference type="Gene3D" id="3.40.50.10490">
    <property type="entry name" value="Glucose-6-phosphate isomerase like protein, domain 1"/>
    <property type="match status" value="2"/>
</dbReference>
<dbReference type="HAMAP" id="MF_00473">
    <property type="entry name" value="G6P_isomerase"/>
    <property type="match status" value="1"/>
</dbReference>
<dbReference type="InterPro" id="IPR001672">
    <property type="entry name" value="G6P_Isomerase"/>
</dbReference>
<dbReference type="InterPro" id="IPR023096">
    <property type="entry name" value="G6P_Isomerase_C"/>
</dbReference>
<dbReference type="InterPro" id="IPR018189">
    <property type="entry name" value="Phosphoglucose_isomerase_CS"/>
</dbReference>
<dbReference type="InterPro" id="IPR046348">
    <property type="entry name" value="SIS_dom_sf"/>
</dbReference>
<dbReference type="InterPro" id="IPR035476">
    <property type="entry name" value="SIS_PGI_1"/>
</dbReference>
<dbReference type="InterPro" id="IPR035482">
    <property type="entry name" value="SIS_PGI_2"/>
</dbReference>
<dbReference type="NCBIfam" id="NF001211">
    <property type="entry name" value="PRK00179.1"/>
    <property type="match status" value="1"/>
</dbReference>
<dbReference type="PANTHER" id="PTHR11469">
    <property type="entry name" value="GLUCOSE-6-PHOSPHATE ISOMERASE"/>
    <property type="match status" value="1"/>
</dbReference>
<dbReference type="PANTHER" id="PTHR11469:SF1">
    <property type="entry name" value="GLUCOSE-6-PHOSPHATE ISOMERASE"/>
    <property type="match status" value="1"/>
</dbReference>
<dbReference type="Pfam" id="PF00342">
    <property type="entry name" value="PGI"/>
    <property type="match status" value="1"/>
</dbReference>
<dbReference type="PRINTS" id="PR00662">
    <property type="entry name" value="G6PISOMERASE"/>
</dbReference>
<dbReference type="SUPFAM" id="SSF53697">
    <property type="entry name" value="SIS domain"/>
    <property type="match status" value="1"/>
</dbReference>
<dbReference type="PROSITE" id="PS00765">
    <property type="entry name" value="P_GLUCOSE_ISOMERASE_1"/>
    <property type="match status" value="1"/>
</dbReference>
<dbReference type="PROSITE" id="PS00174">
    <property type="entry name" value="P_GLUCOSE_ISOMERASE_2"/>
    <property type="match status" value="1"/>
</dbReference>
<dbReference type="PROSITE" id="PS51463">
    <property type="entry name" value="P_GLUCOSE_ISOMERASE_3"/>
    <property type="match status" value="1"/>
</dbReference>
<keyword id="KW-0963">Cytoplasm</keyword>
<keyword id="KW-0312">Gluconeogenesis</keyword>
<keyword id="KW-0324">Glycolysis</keyword>
<keyword id="KW-0413">Isomerase</keyword>
<gene>
    <name evidence="1" type="primary">pgi</name>
    <name type="ordered locus">Sbal223_3246</name>
</gene>
<feature type="chain" id="PRO_1000135539" description="Glucose-6-phosphate isomerase">
    <location>
        <begin position="1"/>
        <end position="545"/>
    </location>
</feature>
<feature type="active site" description="Proton donor" evidence="1">
    <location>
        <position position="351"/>
    </location>
</feature>
<feature type="active site" evidence="1">
    <location>
        <position position="382"/>
    </location>
</feature>
<feature type="active site" evidence="1">
    <location>
        <position position="510"/>
    </location>
</feature>
<accession>B8EFD8</accession>
<reference key="1">
    <citation type="submission" date="2008-12" db="EMBL/GenBank/DDBJ databases">
        <title>Complete sequence of chromosome of Shewanella baltica OS223.</title>
        <authorList>
            <consortium name="US DOE Joint Genome Institute"/>
            <person name="Lucas S."/>
            <person name="Copeland A."/>
            <person name="Lapidus A."/>
            <person name="Glavina del Rio T."/>
            <person name="Dalin E."/>
            <person name="Tice H."/>
            <person name="Bruce D."/>
            <person name="Goodwin L."/>
            <person name="Pitluck S."/>
            <person name="Chertkov O."/>
            <person name="Meincke L."/>
            <person name="Brettin T."/>
            <person name="Detter J.C."/>
            <person name="Han C."/>
            <person name="Kuske C.R."/>
            <person name="Larimer F."/>
            <person name="Land M."/>
            <person name="Hauser L."/>
            <person name="Kyrpides N."/>
            <person name="Ovchinnikova G."/>
            <person name="Brettar I."/>
            <person name="Rodrigues J."/>
            <person name="Konstantinidis K."/>
            <person name="Tiedje J."/>
        </authorList>
    </citation>
    <scope>NUCLEOTIDE SEQUENCE [LARGE SCALE GENOMIC DNA]</scope>
    <source>
        <strain>OS223</strain>
    </source>
</reference>
<comment type="function">
    <text evidence="1">Catalyzes the reversible isomerization of glucose-6-phosphate to fructose-6-phosphate.</text>
</comment>
<comment type="catalytic activity">
    <reaction evidence="1">
        <text>alpha-D-glucose 6-phosphate = beta-D-fructose 6-phosphate</text>
        <dbReference type="Rhea" id="RHEA:11816"/>
        <dbReference type="ChEBI" id="CHEBI:57634"/>
        <dbReference type="ChEBI" id="CHEBI:58225"/>
        <dbReference type="EC" id="5.3.1.9"/>
    </reaction>
</comment>
<comment type="pathway">
    <text evidence="1">Carbohydrate biosynthesis; gluconeogenesis.</text>
</comment>
<comment type="pathway">
    <text evidence="1">Carbohydrate degradation; glycolysis; D-glyceraldehyde 3-phosphate and glycerone phosphate from D-glucose: step 2/4.</text>
</comment>
<comment type="subcellular location">
    <subcellularLocation>
        <location evidence="1">Cytoplasm</location>
    </subcellularLocation>
</comment>
<comment type="similarity">
    <text evidence="1">Belongs to the GPI family.</text>
</comment>
<evidence type="ECO:0000255" key="1">
    <source>
        <dbReference type="HAMAP-Rule" id="MF_00473"/>
    </source>
</evidence>
<proteinExistence type="inferred from homology"/>
<name>G6PI_SHEB2</name>
<protein>
    <recommendedName>
        <fullName evidence="1">Glucose-6-phosphate isomerase</fullName>
        <shortName evidence="1">GPI</shortName>
        <ecNumber evidence="1">5.3.1.9</ecNumber>
    </recommendedName>
    <alternativeName>
        <fullName evidence="1">Phosphoglucose isomerase</fullName>
        <shortName evidence="1">PGI</shortName>
    </alternativeName>
    <alternativeName>
        <fullName evidence="1">Phosphohexose isomerase</fullName>
        <shortName evidence="1">PHI</shortName>
    </alternativeName>
</protein>
<organism>
    <name type="scientific">Shewanella baltica (strain OS223)</name>
    <dbReference type="NCBI Taxonomy" id="407976"/>
    <lineage>
        <taxon>Bacteria</taxon>
        <taxon>Pseudomonadati</taxon>
        <taxon>Pseudomonadota</taxon>
        <taxon>Gammaproteobacteria</taxon>
        <taxon>Alteromonadales</taxon>
        <taxon>Shewanellaceae</taxon>
        <taxon>Shewanella</taxon>
    </lineage>
</organism>
<sequence length="545" mass="59509">MTLLTQSSTWQALSAHSKNVPHMRELFATDTARFNKMSLSACGLLLDYSKNRATAETLDLLFALASNSQLEAKIKAMFAGEIINTTEKRAVLHTALRSTAEQSIIAEGQDIVPEVQQTLNKMQGFVSSVTSGQWKGYTGKAITDIVSIGIGGSFLGPKIVSQALRPYWNPELKCHFVANVDGTSISEKLKLLDPETTLFIMSSKSFGTQETLTNTLTAREWFLAKGGLQSDVAKHFVAVTSNVAKATDFGIDADNIFPMWDWVGGRYSLWSAIGLPIALLIGMDNFRALLSGAHQMDEHFANAPLTENMPVIMGLLSLWYGNFFNAQSNVVLTYDHYLRGLPAYFQQLDMESNGKSVTLNGTAVDYSTGPVIWGGEGTNGQHAYHQLLHQGTALIPADFIMPLQSHNPIGEHHDQLASNCFGQTQALMQGRTFDEALAELANSALSATEKQLIAKHKVMPGNKPSNTLLMDKLTPSTLGALIALYEHRTFVQGAIWDINSFDQWGVELGKDLGNDVLTRIGASQDCDALDASSNALINLYRQGKI</sequence>